<organism>
    <name type="scientific">Monascus ruber</name>
    <name type="common">Mold</name>
    <dbReference type="NCBI Taxonomy" id="89489"/>
    <lineage>
        <taxon>Eukaryota</taxon>
        <taxon>Fungi</taxon>
        <taxon>Dikarya</taxon>
        <taxon>Ascomycota</taxon>
        <taxon>Pezizomycotina</taxon>
        <taxon>Eurotiomycetes</taxon>
        <taxon>Eurotiomycetidae</taxon>
        <taxon>Eurotiales</taxon>
        <taxon>Aspergillaceae</taxon>
        <taxon>Monascus</taxon>
    </lineage>
</organism>
<sequence>MMLLTLLILSSVGLAAAADPSLFSENDYSPDNIVNRDVLIVGGGAAGTHAAVRLKDLGKSFTLVEKSSVLGGHTHTYIDPTTGTPVEFGVHSFGNTSDTRDFFARFEIPLVDFVPARFPVHYIDFNTGDAVAVALDTNVTGYLDQVEKYPSLAYGWLTSFPVPSDLLLSFGDFVNKYSLQKIVYTIYYLGVGIGNILQQLTITVMNSVGVGILSGLQGVPGGAVVPAAGNNHAIFDKALAELRADILLNSHVVAASRPANNSGVKVVVQTPNSRKLVLAKRIIVAVLTQPENMNVFSPDEREARLFSQLKGQAFYVGLVTNTGLPVNQSYYNAASSEPDNVPLLPKTYNIQSTVLPGVFWWLYGSETALTEAAVKTAVTSQIATVRRALNVPAPAGSPQFLAFGNHTPTHVTVPAEAIASGFYRDLYGLQGYRNTWYTGAQFIDSASGIWNLTNAVVLPGLLTGL</sequence>
<reference key="1">
    <citation type="submission" date="2016-05" db="EMBL/GenBank/DDBJ databases">
        <title>The biosynthetic steps of Monascus azahpilone pigments in fungi.</title>
        <authorList>
            <person name="Chen W."/>
            <person name="Chen F."/>
        </authorList>
    </citation>
    <scope>NUCLEOTIDE SEQUENCE [MRNA]</scope>
    <source>
        <strain>M7</strain>
    </source>
</reference>
<reference key="2">
    <citation type="submission" date="2019-04" db="EMBL/GenBank/DDBJ databases">
        <authorList>
            <person name="Guo X."/>
            <person name="Chen M."/>
            <person name="Ma X."/>
        </authorList>
    </citation>
    <scope>NUCLEOTIDE SEQUENCE [GENOMIC DNA]</scope>
    <source>
        <strain>CGMCC 3.19587</strain>
    </source>
</reference>
<reference key="3">
    <citation type="journal article" date="1977" name="Plant Physiol.">
        <title>Pigmentation and antibacterial activity of fast neutron- and X-ray-induced strains of Monascus purpureus went.</title>
        <authorList>
            <person name="Wong H.C."/>
            <person name="Bau Y.S."/>
        </authorList>
    </citation>
    <scope>BIOTECHNOLOGY</scope>
</reference>
<reference key="4">
    <citation type="journal article" date="2005" name="Chem. Biodivers.">
        <title>Anti-tumor-initiating effects of monascin, an azaphilonoid pigment from the extract of Monascus pilosus fermented rice (red-mold rice).</title>
        <authorList>
            <person name="Akihisa T."/>
            <person name="Tokuda H."/>
            <person name="Ukiya M."/>
            <person name="Kiyota A."/>
            <person name="Yasukawa K."/>
            <person name="Sakamoto N."/>
            <person name="Kimura Y."/>
            <person name="Suzuki T."/>
            <person name="Takayasu J."/>
            <person name="Nishino H."/>
        </authorList>
    </citation>
    <scope>BIOTECHNOLOGY</scope>
</reference>
<reference key="5">
    <citation type="journal article" date="2006" name="Appl. Microbiol. Biotechnol.">
        <title>In vivo hypolipidemic effects and safety of low dosage Monascus powder in a hamster model of hyperlipidemia.</title>
        <authorList>
            <person name="Lee C.L."/>
            <person name="Tsai T.Y."/>
            <person name="Wang J.J."/>
            <person name="Pan T.M."/>
        </authorList>
    </citation>
    <scope>BIOTECHNOLOGY</scope>
</reference>
<reference key="6">
    <citation type="journal article" date="2010" name="J. Agric. Food Chem.">
        <title>Monascin and ankaflavin act as novel hypolipidemic and high-density lipoprotein cholesterol-raising agents in red mold dioscorea.</title>
        <authorList>
            <person name="Lee C.L."/>
            <person name="Kung Y.H."/>
            <person name="Wu C.L."/>
            <person name="Hsu Y.W."/>
            <person name="Pan T.M."/>
        </authorList>
    </citation>
    <scope>BIOTECHNOLOGY</scope>
</reference>
<reference key="7">
    <citation type="journal article" date="2012" name="Appl. Microbiol. Biotechnol.">
        <title>Development of Monascus fermentation technology for high hypolipidemic effect.</title>
        <authorList>
            <person name="Lee C.L."/>
            <person name="Pan T.M."/>
        </authorList>
    </citation>
    <scope>BIOTECHNOLOGY</scope>
</reference>
<reference key="8">
    <citation type="journal article" date="2016" name="Appl. Microbiol. Biotechnol.">
        <title>Identification and role analysis of an intermediate produced by a polygenic mutant of Monascus pigments cluster in Monascus ruber M7.</title>
        <authorList>
            <person name="Liu J."/>
            <person name="Zhou Y."/>
            <person name="Yi T."/>
            <person name="Zhao M."/>
            <person name="Xie N."/>
            <person name="Lei M."/>
            <person name="Liu Q."/>
            <person name="Shao Y."/>
            <person name="Chen F."/>
        </authorList>
    </citation>
    <scope>FUNCTION</scope>
    <scope>PATHWAY</scope>
</reference>
<reference key="9">
    <citation type="journal article" date="2017" name="Chem. Sci.">
        <title>Orange, red, yellow: biosynthesis of azaphilone pigments in Monascus fungi.</title>
        <authorList>
            <person name="Chen W."/>
            <person name="Chen R."/>
            <person name="Liu Q."/>
            <person name="He Y."/>
            <person name="He K."/>
            <person name="Ding X."/>
            <person name="Kang L."/>
            <person name="Guo X."/>
            <person name="Xie N."/>
            <person name="Zhou Y."/>
            <person name="Lu Y."/>
            <person name="Cox R.J."/>
            <person name="Molnar I."/>
            <person name="Li M."/>
            <person name="Shao Y."/>
            <person name="Chen F."/>
        </authorList>
    </citation>
    <scope>FUNCTION</scope>
    <scope>PATHWAY</scope>
</reference>
<reference key="10">
    <citation type="journal article" date="2021" name="Front. Microbiol.">
        <title>An integrated approach to determine the boundaries of the azaphilone pigment biosynthetic gene cluster of Monascus ruber M7 gown on potato dextrose agar.</title>
        <authorList>
            <person name="Liu Q."/>
            <person name="Zhong S."/>
            <person name="Wang X."/>
            <person name="Gao S."/>
            <person name="Yang X."/>
            <person name="Chen F."/>
            <person name="Molnar I."/>
        </authorList>
    </citation>
    <scope>FUNCTION</scope>
    <scope>INDUCTION</scope>
</reference>
<reference key="11">
    <citation type="journal article" date="2023" name="Food Res. Intern.">
        <title>Improved natural food colorant production in the filamentous fungus Monascus ruber using CRISPR-based engineering.</title>
        <authorList>
            <person name="Ree Yoon H."/>
            <person name="Han S."/>
            <person name="Chul Shin S."/>
            <person name="Cheong Yeom S."/>
            <person name="Jin Kim H."/>
        </authorList>
    </citation>
    <scope>BIOTECHNOLOGY</scope>
</reference>
<comment type="function">
    <text evidence="9 10 11">FAD-dependent oxidoreductase; part of the gene cluster that mediates the biosynthesis of azaphilone pigments (MonAzPs), a complex mixture of compounds with a common azaphilone skeleton very widely used as food colorants (PubMed:26946170, PubMed:28959415, PubMed:34220766). Within the pathway, pigF desaturates C6(7) to afford the orange and red pigments from yellow pigments (PubMed:28959415). The first step of the pathway is performed by the nrPKS pigA that forms the hexaketide precursor from successive condensations of five malonyl-CoA units, with a simple acetyl-CoA starter unit. The role of esterase pigG is not clear, but it may play at most a supplementary role in the formation of the benzaldehyde produced by the pigA nrPKS. This very reactive benzaldehyde is intercepted by the pigC ketoreductase that to provide the first stable enzyme-free MonAzPs intermediate, 6-(4-hydroxy-2-oxopentyl)-3-methyl-2,4-dioxocyclohexane carbaldehyde, also known as M7PKS-1. The FAD-dependent monooxygenase pigN hydroxylates M7PKS-1 at C-4, which triggers the formation of the pyran ring. PigJ, pigK and pigD are involved in the acetylation of the pyran ring. PigJ and pigK form the two subunits of a dedicated fungal FAS that produces the side chain fatty acyl moiety of MonAzPs and pigD transfers the fatty acyl chain to the C-4 alcohol. PigM and pigO are involved in the elimination of the omega-1 alcohol. PigM acts as an O-acetyltransferase that synthesizes the putative O-11 acetyl intermediate whereas pigO eliminates acetic acid to yield an intermediate with a C10(11) double bond. The dehydration of the C-11 alcohol followed by the reduction of the C6(7) double bond by the NAD(P)H-dependent oxidoreductase pigE increases the electrophilicity of the C-5 ketone of the resulting acyl benzopyran. This in turn sets up the C-5 ketone for an intramolecular Knoevenagel aldol condensation with the C-20 enol of the side chain. This condensation affords the characteristic linear tricyclic carbon skeletons of the yellow pigments that serve as the common precursors for the classical yellow pigments monascin and ankaflavin, orange pigments rubopunctatin and monascorubrin, and red pigments ribropunctamine and monascorubramine. The FAD-dependent oxidoreductase pigF is especially invoved in the biosynthesis of orange and red pigments via desaturation of C6(7) (PubMed:28959415).</text>
</comment>
<comment type="cofactor">
    <cofactor evidence="1">
        <name>FAD</name>
        <dbReference type="ChEBI" id="CHEBI:57692"/>
    </cofactor>
</comment>
<comment type="pathway">
    <text evidence="9 10">Secondary metabolite biosynthesis.</text>
</comment>
<comment type="subcellular location">
    <subcellularLocation>
        <location evidence="2">Cell membrane</location>
        <topology evidence="2">Lipid-anchor</topology>
        <topology evidence="2">GPI-anchor</topology>
    </subcellularLocation>
</comment>
<comment type="induction">
    <text evidence="11">Expression is positively regulated by the azaphilone pigments (MonAzPs) gene cluster-specific transcription regulator pigB.</text>
</comment>
<comment type="biotechnology">
    <text evidence="4 5 6 7 8 12">As colorants, MonAzPs are widely used in various food products for centuries (PubMed:37087240). Moreover, MonAzPs also possess wide-ranging biological activities such as antibacterial activity, preventing hypertension, lowering cholesterol levels, causing hypolipidemic effects, and displaying antiobesity and antitumor activities (PubMed:16283302, PubMed:16660141, PubMed:17191930, PubMed:20666456, PubMed:22562164).</text>
</comment>
<comment type="similarity">
    <text evidence="14">Belongs to the beta-cyclopiazonate dehydrogenase family.</text>
</comment>
<dbReference type="EC" id="1.21.-.-" evidence="15"/>
<dbReference type="EMBL" id="KX278306">
    <property type="protein sequence ID" value="APZ73941.1"/>
    <property type="molecule type" value="mRNA"/>
</dbReference>
<dbReference type="EMBL" id="MK764691">
    <property type="protein sequence ID" value="QGA67188.1"/>
    <property type="molecule type" value="Genomic_DNA"/>
</dbReference>
<dbReference type="SMR" id="A0A1P8VFM2"/>
<dbReference type="GO" id="GO:0005886">
    <property type="term" value="C:plasma membrane"/>
    <property type="evidence" value="ECO:0007669"/>
    <property type="project" value="UniProtKB-SubCell"/>
</dbReference>
<dbReference type="GO" id="GO:0098552">
    <property type="term" value="C:side of membrane"/>
    <property type="evidence" value="ECO:0007669"/>
    <property type="project" value="UniProtKB-KW"/>
</dbReference>
<dbReference type="GO" id="GO:0016491">
    <property type="term" value="F:oxidoreductase activity"/>
    <property type="evidence" value="ECO:0007669"/>
    <property type="project" value="UniProtKB-KW"/>
</dbReference>
<dbReference type="GO" id="GO:0031409">
    <property type="term" value="F:pigment binding"/>
    <property type="evidence" value="ECO:0007669"/>
    <property type="project" value="UniProtKB-KW"/>
</dbReference>
<dbReference type="Gene3D" id="1.10.405.20">
    <property type="match status" value="1"/>
</dbReference>
<dbReference type="Gene3D" id="3.30.70.1990">
    <property type="match status" value="1"/>
</dbReference>
<dbReference type="Gene3D" id="3.50.50.60">
    <property type="entry name" value="FAD/NAD(P)-binding domain"/>
    <property type="match status" value="1"/>
</dbReference>
<dbReference type="InterPro" id="IPR036188">
    <property type="entry name" value="FAD/NAD-bd_sf"/>
</dbReference>
<dbReference type="InterPro" id="IPR050464">
    <property type="entry name" value="Zeta_carotene_desat/Oxidored"/>
</dbReference>
<dbReference type="PANTHER" id="PTHR42923:SF26">
    <property type="entry name" value="FMN REDUCTASE LOT6, PUTATIVE (AFU_ORTHOLOGUE AFUA_7G06600)-RELATED"/>
    <property type="match status" value="1"/>
</dbReference>
<dbReference type="PANTHER" id="PTHR42923">
    <property type="entry name" value="PROTOPORPHYRINOGEN OXIDASE"/>
    <property type="match status" value="1"/>
</dbReference>
<dbReference type="Pfam" id="PF13450">
    <property type="entry name" value="NAD_binding_8"/>
    <property type="match status" value="1"/>
</dbReference>
<dbReference type="SUPFAM" id="SSF51905">
    <property type="entry name" value="FAD/NAD(P)-binding domain"/>
    <property type="match status" value="1"/>
</dbReference>
<name>PIGF_MONRU</name>
<feature type="signal peptide" evidence="2">
    <location>
        <begin position="1"/>
        <end position="17"/>
    </location>
</feature>
<feature type="chain" id="PRO_5036024200" description="FAD-dependent oxidoreductase pigF">
    <location>
        <begin position="18"/>
        <end position="444"/>
    </location>
</feature>
<feature type="propeptide" id="PRO_0000460209" description="Removed in mature form" evidence="2">
    <location>
        <begin position="445"/>
        <end position="465"/>
    </location>
</feature>
<feature type="lipid moiety-binding region" description="GPI-anchor amidated aspartate" evidence="2">
    <location>
        <position position="444"/>
    </location>
</feature>
<feature type="glycosylation site" description="N-linked (GlcNAc...) asparagine" evidence="3">
    <location>
        <position position="95"/>
    </location>
</feature>
<feature type="glycosylation site" description="N-linked (GlcNAc...) asparagine" evidence="3">
    <location>
        <position position="138"/>
    </location>
</feature>
<feature type="glycosylation site" description="N-linked (GlcNAc...) asparagine" evidence="3">
    <location>
        <position position="260"/>
    </location>
</feature>
<feature type="glycosylation site" description="N-linked (GlcNAc...) asparagine" evidence="3">
    <location>
        <position position="327"/>
    </location>
</feature>
<feature type="glycosylation site" description="N-linked (GlcNAc...) asparagine" evidence="3">
    <location>
        <position position="451"/>
    </location>
</feature>
<gene>
    <name evidence="13" type="primary">pigF</name>
</gene>
<keyword id="KW-1003">Cell membrane</keyword>
<keyword id="KW-0274">FAD</keyword>
<keyword id="KW-0285">Flavoprotein</keyword>
<keyword id="KW-0325">Glycoprotein</keyword>
<keyword id="KW-0336">GPI-anchor</keyword>
<keyword id="KW-0449">Lipoprotein</keyword>
<keyword id="KW-0472">Membrane</keyword>
<keyword id="KW-0560">Oxidoreductase</keyword>
<keyword id="KW-0608">Pigment</keyword>
<keyword id="KW-0732">Signal</keyword>
<proteinExistence type="evidence at protein level"/>
<evidence type="ECO:0000250" key="1">
    <source>
        <dbReference type="UniProtKB" id="B8NI10"/>
    </source>
</evidence>
<evidence type="ECO:0000255" key="2"/>
<evidence type="ECO:0000255" key="3">
    <source>
        <dbReference type="PROSITE-ProRule" id="PRU00498"/>
    </source>
</evidence>
<evidence type="ECO:0000269" key="4">
    <source>
    </source>
</evidence>
<evidence type="ECO:0000269" key="5">
    <source>
    </source>
</evidence>
<evidence type="ECO:0000269" key="6">
    <source>
    </source>
</evidence>
<evidence type="ECO:0000269" key="7">
    <source>
    </source>
</evidence>
<evidence type="ECO:0000269" key="8">
    <source>
    </source>
</evidence>
<evidence type="ECO:0000269" key="9">
    <source>
    </source>
</evidence>
<evidence type="ECO:0000269" key="10">
    <source>
    </source>
</evidence>
<evidence type="ECO:0000269" key="11">
    <source>
    </source>
</evidence>
<evidence type="ECO:0000269" key="12">
    <source>
    </source>
</evidence>
<evidence type="ECO:0000303" key="13">
    <source>
    </source>
</evidence>
<evidence type="ECO:0000305" key="14"/>
<evidence type="ECO:0000305" key="15">
    <source>
    </source>
</evidence>
<accession>A0A1P8VFM2</accession>
<protein>
    <recommendedName>
        <fullName evidence="13">FAD-dependent oxidoreductase pigF</fullName>
        <ecNumber evidence="15">1.21.-.-</ecNumber>
    </recommendedName>
    <alternativeName>
        <fullName evidence="13">Azaphilone pigments biosynthesis cluster protein F</fullName>
    </alternativeName>
</protein>